<keyword id="KW-0456">Lyase</keyword>
<keyword id="KW-0460">Magnesium</keyword>
<keyword id="KW-0479">Metal-binding</keyword>
<keyword id="KW-0560">Oxidoreductase</keyword>
<comment type="function">
    <text evidence="2">Sesquiterpene synthase involved in germacrene A biosynthesis (PubMed:19580670). Germacrene A is a precursor of several sesquiterpene lactones (PubMed:19580670).</text>
</comment>
<comment type="catalytic activity">
    <reaction evidence="2">
        <text>(2E,6E)-farnesyl diphosphate = (+)-(R)-germacrene A + diphosphate</text>
        <dbReference type="Rhea" id="RHEA:12516"/>
        <dbReference type="ChEBI" id="CHEBI:33019"/>
        <dbReference type="ChEBI" id="CHEBI:41595"/>
        <dbReference type="ChEBI" id="CHEBI:175763"/>
        <dbReference type="EC" id="4.2.3.23"/>
    </reaction>
    <physiologicalReaction direction="left-to-right" evidence="2">
        <dbReference type="Rhea" id="RHEA:12517"/>
    </physiologicalReaction>
</comment>
<comment type="cofactor">
    <cofactor evidence="1">
        <name>Mg(2+)</name>
        <dbReference type="ChEBI" id="CHEBI:18420"/>
    </cofactor>
    <text evidence="1">Binds 3 Mg(2+) ions per subunit.</text>
</comment>
<comment type="biophysicochemical properties">
    <kinetics>
        <KM evidence="2">0.82 uM for farnesyl diphosphate</KM>
    </kinetics>
    <phDependence>
        <text evidence="2">Optimum pH is 7.7.</text>
    </phDependence>
</comment>
<comment type="pathway">
    <text evidence="1">Secondary metabolite biosynthesis; terpenoid biosynthesis.</text>
</comment>
<comment type="subunit">
    <text evidence="1">Monomer.</text>
</comment>
<comment type="tissue specificity">
    <text evidence="2">Mainly expressed in sunflower trichomes.</text>
</comment>
<comment type="domain">
    <text evidence="1">The Asp-Asp-Xaa-Xaa-Asp/Glu (DDXXD/E) motif is important for the catalytic activity, presumably through binding to Mg(2+).</text>
</comment>
<comment type="similarity">
    <text evidence="4">Belongs to the terpene synthase family.</text>
</comment>
<sequence length="559" mass="64383">MAAVGASATPLTNTKSTAEPVRPVANFPPSVWGDLFLSFSLDKSIMEEYAEAMEEPKEQVRRLILDPTMDSNKKLSLIYTVHRLGLTYMFLKEIEAQLDRLFKEFNLEDYVELDLYTISINFQAFRHLGYKLPCDVFNKFKNDDSTTFKESITGDVRGMLGLYESAQLRLKGENILDEASAFAETKLKSLVNTLEGSLAQQVKQSLRRPFHQGMPMVEARLYFSNYQEECSAHDSILKLAKLHFNYLQLQQKEELRIVSQWWKDMRFQETTPYIRDRVPEIYLWILGLYFEPRYSLARIIATKITLFLVVLDDTYDAYATIEEIRLLTDAINRWDISAMNQIPEYIRPFYKILLDEYAELEKQLAKEGRANSVIASKEAFQDIARGYLEEAEWTNSGYVASFPEYMKNGLITSAYNVISKSALVGMGEIVSEDALVWYESHPQILQASELISRLQDDVMTYQFERERGQSATGVDSYIKTYGVSEKVAIDELKKMIENAWKEINEGCLKPREVSMDLLAPILNLARMIDVVYRYDDGFTFPGKTLKEYITLLFVGSSPM</sequence>
<proteinExistence type="evidence at protein level"/>
<accession>Q4U3F7</accession>
<evidence type="ECO:0000250" key="1">
    <source>
        <dbReference type="UniProtKB" id="Q40577"/>
    </source>
</evidence>
<evidence type="ECO:0000269" key="2">
    <source>
    </source>
</evidence>
<evidence type="ECO:0000303" key="3">
    <source>
    </source>
</evidence>
<evidence type="ECO:0000305" key="4"/>
<feature type="chain" id="PRO_0000422213" description="Germacrene A synthase 1">
    <location>
        <begin position="1"/>
        <end position="559"/>
    </location>
</feature>
<feature type="short sequence motif" description="DDXXD motif" evidence="4">
    <location>
        <begin position="312"/>
        <end position="316"/>
    </location>
</feature>
<feature type="binding site" evidence="1">
    <location>
        <position position="312"/>
    </location>
    <ligand>
        <name>Mg(2+)</name>
        <dbReference type="ChEBI" id="CHEBI:18420"/>
        <label>1</label>
    </ligand>
</feature>
<feature type="binding site" evidence="1">
    <location>
        <position position="312"/>
    </location>
    <ligand>
        <name>Mg(2+)</name>
        <dbReference type="ChEBI" id="CHEBI:18420"/>
        <label>2</label>
    </ligand>
</feature>
<feature type="binding site" evidence="1">
    <location>
        <position position="316"/>
    </location>
    <ligand>
        <name>Mg(2+)</name>
        <dbReference type="ChEBI" id="CHEBI:18420"/>
        <label>1</label>
    </ligand>
</feature>
<feature type="binding site" evidence="1">
    <location>
        <position position="316"/>
    </location>
    <ligand>
        <name>Mg(2+)</name>
        <dbReference type="ChEBI" id="CHEBI:18420"/>
        <label>2</label>
    </ligand>
</feature>
<feature type="binding site" evidence="1">
    <location>
        <position position="456"/>
    </location>
    <ligand>
        <name>Mg(2+)</name>
        <dbReference type="ChEBI" id="CHEBI:18420"/>
        <label>3</label>
    </ligand>
</feature>
<feature type="binding site" evidence="1">
    <location>
        <position position="460"/>
    </location>
    <ligand>
        <name>Mg(2+)</name>
        <dbReference type="ChEBI" id="CHEBI:18420"/>
        <label>3</label>
    </ligand>
</feature>
<feature type="binding site" evidence="1">
    <location>
        <position position="464"/>
    </location>
    <ligand>
        <name>Mg(2+)</name>
        <dbReference type="ChEBI" id="CHEBI:18420"/>
        <label>3</label>
    </ligand>
</feature>
<name>GAS1_HELAN</name>
<reference key="1">
    <citation type="journal article" date="2009" name="BMC Plant Biol.">
        <title>Identification, functional characterization and developmental regulation of sesquiterpene synthases from sunflower capitate glandular trichomes.</title>
        <authorList>
            <person name="Goepfert J.C."/>
            <person name="Macnevin G."/>
            <person name="Ro D.-K."/>
            <person name="Spring O."/>
        </authorList>
    </citation>
    <scope>NUCLEOTIDE SEQUENCE [GENOMIC DNA / MRNA]</scope>
    <scope>FUNCTION</scope>
    <scope>CATALYTIC ACTIVITY</scope>
    <scope>BIOPHYSICOCHEMICAL PROPERTIES</scope>
    <scope>TISSUE SPECIFICITY</scope>
    <source>
        <tissue>Trichome gland</tissue>
    </source>
</reference>
<reference key="2">
    <citation type="journal article" date="2019" name="Nat. Prod. Rep.">
        <title>Non-volatile natural products in plant glandular trichomes: chemistry, biological activities and biosynthesis.</title>
        <authorList>
            <person name="Liu Y."/>
            <person name="Jing S.-X."/>
            <person name="Luo S.-H."/>
            <person name="Li S.-H."/>
        </authorList>
    </citation>
    <scope>PATHWAY</scope>
    <scope>REVIEW</scope>
</reference>
<protein>
    <recommendedName>
        <fullName evidence="3">Germacrene A synthase 1</fullName>
        <ecNumber evidence="2">4.2.3.23</ecNumber>
    </recommendedName>
    <alternativeName>
        <fullName evidence="3">Terpene synthase 1A</fullName>
        <shortName evidence="3">HaTPS1A</shortName>
    </alternativeName>
</protein>
<dbReference type="EC" id="4.2.3.23" evidence="2"/>
<dbReference type="EMBL" id="DQ016667">
    <property type="protein sequence ID" value="AAY41421.2"/>
    <property type="molecule type" value="mRNA"/>
</dbReference>
<dbReference type="EMBL" id="EU439590">
    <property type="protein sequence ID" value="ACA14463.1"/>
    <property type="molecule type" value="Genomic_DNA"/>
</dbReference>
<dbReference type="SMR" id="Q4U3F7"/>
<dbReference type="EnsemblPlants" id="mRNA:HanXRQr2_Chr06g0249511">
    <property type="protein sequence ID" value="mRNA:HanXRQr2_Chr06g0249511"/>
    <property type="gene ID" value="HanXRQr2_Chr06g0249511"/>
</dbReference>
<dbReference type="Gramene" id="mRNA:HanXRQr2_Chr06g0249511">
    <property type="protein sequence ID" value="mRNA:HanXRQr2_Chr06g0249511"/>
    <property type="gene ID" value="HanXRQr2_Chr06g0249511"/>
</dbReference>
<dbReference type="OMA" id="YDITCDE"/>
<dbReference type="OrthoDB" id="1877784at2759"/>
<dbReference type="BRENDA" id="4.2.3.23">
    <property type="organism ID" value="2597"/>
</dbReference>
<dbReference type="UniPathway" id="UPA00213"/>
<dbReference type="GO" id="GO:0034005">
    <property type="term" value="F:germacrene-A synthase activity"/>
    <property type="evidence" value="ECO:0000314"/>
    <property type="project" value="UniProtKB"/>
</dbReference>
<dbReference type="GO" id="GO:0000287">
    <property type="term" value="F:magnesium ion binding"/>
    <property type="evidence" value="ECO:0007669"/>
    <property type="project" value="InterPro"/>
</dbReference>
<dbReference type="GO" id="GO:0016491">
    <property type="term" value="F:oxidoreductase activity"/>
    <property type="evidence" value="ECO:0007669"/>
    <property type="project" value="UniProtKB-KW"/>
</dbReference>
<dbReference type="GO" id="GO:0016102">
    <property type="term" value="P:diterpenoid biosynthetic process"/>
    <property type="evidence" value="ECO:0007669"/>
    <property type="project" value="InterPro"/>
</dbReference>
<dbReference type="GO" id="GO:0051762">
    <property type="term" value="P:sesquiterpene biosynthetic process"/>
    <property type="evidence" value="ECO:0000314"/>
    <property type="project" value="UniProtKB"/>
</dbReference>
<dbReference type="CDD" id="cd00684">
    <property type="entry name" value="Terpene_cyclase_plant_C1"/>
    <property type="match status" value="1"/>
</dbReference>
<dbReference type="FunFam" id="1.10.600.10:FF:000007">
    <property type="entry name" value="Isoprene synthase, chloroplastic"/>
    <property type="match status" value="1"/>
</dbReference>
<dbReference type="FunFam" id="1.50.10.130:FF:000001">
    <property type="entry name" value="Isoprene synthase, chloroplastic"/>
    <property type="match status" value="1"/>
</dbReference>
<dbReference type="Gene3D" id="1.10.600.10">
    <property type="entry name" value="Farnesyl Diphosphate Synthase"/>
    <property type="match status" value="1"/>
</dbReference>
<dbReference type="Gene3D" id="1.50.10.130">
    <property type="entry name" value="Terpene synthase, N-terminal domain"/>
    <property type="match status" value="1"/>
</dbReference>
<dbReference type="InterPro" id="IPR008949">
    <property type="entry name" value="Isoprenoid_synthase_dom_sf"/>
</dbReference>
<dbReference type="InterPro" id="IPR034741">
    <property type="entry name" value="Terpene_cyclase-like_1_C"/>
</dbReference>
<dbReference type="InterPro" id="IPR044814">
    <property type="entry name" value="Terpene_cyclase_plant_C1"/>
</dbReference>
<dbReference type="InterPro" id="IPR001906">
    <property type="entry name" value="Terpene_synth_N"/>
</dbReference>
<dbReference type="InterPro" id="IPR036965">
    <property type="entry name" value="Terpene_synth_N_sf"/>
</dbReference>
<dbReference type="InterPro" id="IPR050148">
    <property type="entry name" value="Terpene_synthase-like"/>
</dbReference>
<dbReference type="InterPro" id="IPR005630">
    <property type="entry name" value="Terpene_synthase_metal-bd"/>
</dbReference>
<dbReference type="InterPro" id="IPR008930">
    <property type="entry name" value="Terpenoid_cyclase/PrenylTrfase"/>
</dbReference>
<dbReference type="PANTHER" id="PTHR31225:SF120">
    <property type="entry name" value="GERMACRENE-A SYNTHASE"/>
    <property type="match status" value="1"/>
</dbReference>
<dbReference type="PANTHER" id="PTHR31225">
    <property type="entry name" value="OS04G0344100 PROTEIN-RELATED"/>
    <property type="match status" value="1"/>
</dbReference>
<dbReference type="Pfam" id="PF01397">
    <property type="entry name" value="Terpene_synth"/>
    <property type="match status" value="1"/>
</dbReference>
<dbReference type="Pfam" id="PF03936">
    <property type="entry name" value="Terpene_synth_C"/>
    <property type="match status" value="1"/>
</dbReference>
<dbReference type="SFLD" id="SFLDS00005">
    <property type="entry name" value="Isoprenoid_Synthase_Type_I"/>
    <property type="match status" value="1"/>
</dbReference>
<dbReference type="SFLD" id="SFLDG01019">
    <property type="entry name" value="Terpene_Cyclase_Like_1_C_Termi"/>
    <property type="match status" value="1"/>
</dbReference>
<dbReference type="SUPFAM" id="SSF48239">
    <property type="entry name" value="Terpenoid cyclases/Protein prenyltransferases"/>
    <property type="match status" value="1"/>
</dbReference>
<dbReference type="SUPFAM" id="SSF48576">
    <property type="entry name" value="Terpenoid synthases"/>
    <property type="match status" value="1"/>
</dbReference>
<organism>
    <name type="scientific">Helianthus annuus</name>
    <name type="common">Common sunflower</name>
    <dbReference type="NCBI Taxonomy" id="4232"/>
    <lineage>
        <taxon>Eukaryota</taxon>
        <taxon>Viridiplantae</taxon>
        <taxon>Streptophyta</taxon>
        <taxon>Embryophyta</taxon>
        <taxon>Tracheophyta</taxon>
        <taxon>Spermatophyta</taxon>
        <taxon>Magnoliopsida</taxon>
        <taxon>eudicotyledons</taxon>
        <taxon>Gunneridae</taxon>
        <taxon>Pentapetalae</taxon>
        <taxon>asterids</taxon>
        <taxon>campanulids</taxon>
        <taxon>Asterales</taxon>
        <taxon>Asteraceae</taxon>
        <taxon>Asteroideae</taxon>
        <taxon>Heliantheae alliance</taxon>
        <taxon>Heliantheae</taxon>
        <taxon>Helianthus</taxon>
    </lineage>
</organism>
<gene>
    <name evidence="3" type="primary">GAS1</name>
</gene>